<name>DNLJ_PAEAT</name>
<reference key="1">
    <citation type="journal article" date="2006" name="PLoS Genet.">
        <title>Secrets of soil survival revealed by the genome sequence of Arthrobacter aurescens TC1.</title>
        <authorList>
            <person name="Mongodin E.F."/>
            <person name="Shapir N."/>
            <person name="Daugherty S.C."/>
            <person name="DeBoy R.T."/>
            <person name="Emerson J.B."/>
            <person name="Shvartzbeyn A."/>
            <person name="Radune D."/>
            <person name="Vamathevan J."/>
            <person name="Riggs F."/>
            <person name="Grinberg V."/>
            <person name="Khouri H.M."/>
            <person name="Wackett L.P."/>
            <person name="Nelson K.E."/>
            <person name="Sadowsky M.J."/>
        </authorList>
    </citation>
    <scope>NUCLEOTIDE SEQUENCE [LARGE SCALE GENOMIC DNA]</scope>
    <source>
        <strain>TC1</strain>
    </source>
</reference>
<evidence type="ECO:0000255" key="1">
    <source>
        <dbReference type="HAMAP-Rule" id="MF_01588"/>
    </source>
</evidence>
<evidence type="ECO:0000256" key="2">
    <source>
        <dbReference type="SAM" id="MobiDB-lite"/>
    </source>
</evidence>
<feature type="chain" id="PRO_0000313116" description="DNA ligase">
    <location>
        <begin position="1"/>
        <end position="768"/>
    </location>
</feature>
<feature type="domain" description="BRCT" evidence="1">
    <location>
        <begin position="661"/>
        <end position="750"/>
    </location>
</feature>
<feature type="region of interest" description="Disordered" evidence="2">
    <location>
        <begin position="739"/>
        <end position="768"/>
    </location>
</feature>
<feature type="compositionally biased region" description="Low complexity" evidence="2">
    <location>
        <begin position="746"/>
        <end position="768"/>
    </location>
</feature>
<feature type="active site" description="N6-AMP-lysine intermediate" evidence="1">
    <location>
        <position position="148"/>
    </location>
</feature>
<feature type="binding site" evidence="1">
    <location>
        <begin position="61"/>
        <end position="65"/>
    </location>
    <ligand>
        <name>NAD(+)</name>
        <dbReference type="ChEBI" id="CHEBI:57540"/>
    </ligand>
</feature>
<feature type="binding site" evidence="1">
    <location>
        <begin position="110"/>
        <end position="111"/>
    </location>
    <ligand>
        <name>NAD(+)</name>
        <dbReference type="ChEBI" id="CHEBI:57540"/>
    </ligand>
</feature>
<feature type="binding site" evidence="1">
    <location>
        <position position="146"/>
    </location>
    <ligand>
        <name>NAD(+)</name>
        <dbReference type="ChEBI" id="CHEBI:57540"/>
    </ligand>
</feature>
<feature type="binding site" evidence="1">
    <location>
        <position position="169"/>
    </location>
    <ligand>
        <name>NAD(+)</name>
        <dbReference type="ChEBI" id="CHEBI:57540"/>
    </ligand>
</feature>
<feature type="binding site" evidence="1">
    <location>
        <position position="206"/>
    </location>
    <ligand>
        <name>NAD(+)</name>
        <dbReference type="ChEBI" id="CHEBI:57540"/>
    </ligand>
</feature>
<feature type="binding site" evidence="1">
    <location>
        <position position="322"/>
    </location>
    <ligand>
        <name>NAD(+)</name>
        <dbReference type="ChEBI" id="CHEBI:57540"/>
    </ligand>
</feature>
<feature type="binding site" evidence="1">
    <location>
        <position position="346"/>
    </location>
    <ligand>
        <name>NAD(+)</name>
        <dbReference type="ChEBI" id="CHEBI:57540"/>
    </ligand>
</feature>
<feature type="binding site" evidence="1">
    <location>
        <position position="443"/>
    </location>
    <ligand>
        <name>Zn(2+)</name>
        <dbReference type="ChEBI" id="CHEBI:29105"/>
    </ligand>
</feature>
<feature type="binding site" evidence="1">
    <location>
        <position position="446"/>
    </location>
    <ligand>
        <name>Zn(2+)</name>
        <dbReference type="ChEBI" id="CHEBI:29105"/>
    </ligand>
</feature>
<feature type="binding site" evidence="1">
    <location>
        <position position="462"/>
    </location>
    <ligand>
        <name>Zn(2+)</name>
        <dbReference type="ChEBI" id="CHEBI:29105"/>
    </ligand>
</feature>
<feature type="binding site" evidence="1">
    <location>
        <position position="468"/>
    </location>
    <ligand>
        <name>Zn(2+)</name>
        <dbReference type="ChEBI" id="CHEBI:29105"/>
    </ligand>
</feature>
<dbReference type="EC" id="6.5.1.2" evidence="1"/>
<dbReference type="EMBL" id="CP000474">
    <property type="protein sequence ID" value="ABM07125.1"/>
    <property type="molecule type" value="Genomic_DNA"/>
</dbReference>
<dbReference type="RefSeq" id="WP_011774155.1">
    <property type="nucleotide sequence ID" value="NC_008711.1"/>
</dbReference>
<dbReference type="SMR" id="A1R4P6"/>
<dbReference type="STRING" id="290340.AAur_1434"/>
<dbReference type="KEGG" id="aau:AAur_1434"/>
<dbReference type="eggNOG" id="COG0272">
    <property type="taxonomic scope" value="Bacteria"/>
</dbReference>
<dbReference type="HOGENOM" id="CLU_007764_2_1_11"/>
<dbReference type="OrthoDB" id="9759736at2"/>
<dbReference type="Proteomes" id="UP000000637">
    <property type="component" value="Chromosome"/>
</dbReference>
<dbReference type="GO" id="GO:0005829">
    <property type="term" value="C:cytosol"/>
    <property type="evidence" value="ECO:0007669"/>
    <property type="project" value="TreeGrafter"/>
</dbReference>
<dbReference type="GO" id="GO:0003911">
    <property type="term" value="F:DNA ligase (NAD+) activity"/>
    <property type="evidence" value="ECO:0007669"/>
    <property type="project" value="UniProtKB-UniRule"/>
</dbReference>
<dbReference type="GO" id="GO:0046872">
    <property type="term" value="F:metal ion binding"/>
    <property type="evidence" value="ECO:0007669"/>
    <property type="project" value="UniProtKB-KW"/>
</dbReference>
<dbReference type="GO" id="GO:0006281">
    <property type="term" value="P:DNA repair"/>
    <property type="evidence" value="ECO:0007669"/>
    <property type="project" value="UniProtKB-KW"/>
</dbReference>
<dbReference type="GO" id="GO:0006260">
    <property type="term" value="P:DNA replication"/>
    <property type="evidence" value="ECO:0007669"/>
    <property type="project" value="UniProtKB-KW"/>
</dbReference>
<dbReference type="CDD" id="cd00114">
    <property type="entry name" value="LIGANc"/>
    <property type="match status" value="1"/>
</dbReference>
<dbReference type="FunFam" id="1.10.150.20:FF:000006">
    <property type="entry name" value="DNA ligase"/>
    <property type="match status" value="1"/>
</dbReference>
<dbReference type="FunFam" id="2.40.50.140:FF:000012">
    <property type="entry name" value="DNA ligase"/>
    <property type="match status" value="1"/>
</dbReference>
<dbReference type="FunFam" id="3.30.470.30:FF:000001">
    <property type="entry name" value="DNA ligase"/>
    <property type="match status" value="1"/>
</dbReference>
<dbReference type="FunFam" id="3.40.50.10190:FF:000054">
    <property type="entry name" value="DNA ligase"/>
    <property type="match status" value="1"/>
</dbReference>
<dbReference type="Gene3D" id="6.20.10.30">
    <property type="match status" value="1"/>
</dbReference>
<dbReference type="Gene3D" id="1.10.150.20">
    <property type="entry name" value="5' to 3' exonuclease, C-terminal subdomain"/>
    <property type="match status" value="2"/>
</dbReference>
<dbReference type="Gene3D" id="3.40.50.10190">
    <property type="entry name" value="BRCT domain"/>
    <property type="match status" value="1"/>
</dbReference>
<dbReference type="Gene3D" id="3.30.470.30">
    <property type="entry name" value="DNA ligase/mRNA capping enzyme"/>
    <property type="match status" value="1"/>
</dbReference>
<dbReference type="Gene3D" id="1.10.287.610">
    <property type="entry name" value="Helix hairpin bin"/>
    <property type="match status" value="1"/>
</dbReference>
<dbReference type="Gene3D" id="2.40.50.140">
    <property type="entry name" value="Nucleic acid-binding proteins"/>
    <property type="match status" value="1"/>
</dbReference>
<dbReference type="HAMAP" id="MF_01588">
    <property type="entry name" value="DNA_ligase_A"/>
    <property type="match status" value="1"/>
</dbReference>
<dbReference type="InterPro" id="IPR001357">
    <property type="entry name" value="BRCT_dom"/>
</dbReference>
<dbReference type="InterPro" id="IPR036420">
    <property type="entry name" value="BRCT_dom_sf"/>
</dbReference>
<dbReference type="InterPro" id="IPR041663">
    <property type="entry name" value="DisA/LigA_HHH"/>
</dbReference>
<dbReference type="InterPro" id="IPR001679">
    <property type="entry name" value="DNA_ligase"/>
</dbReference>
<dbReference type="InterPro" id="IPR018239">
    <property type="entry name" value="DNA_ligase_AS"/>
</dbReference>
<dbReference type="InterPro" id="IPR033136">
    <property type="entry name" value="DNA_ligase_CS"/>
</dbReference>
<dbReference type="InterPro" id="IPR013839">
    <property type="entry name" value="DNAligase_adenylation"/>
</dbReference>
<dbReference type="InterPro" id="IPR013840">
    <property type="entry name" value="DNAligase_N"/>
</dbReference>
<dbReference type="InterPro" id="IPR012340">
    <property type="entry name" value="NA-bd_OB-fold"/>
</dbReference>
<dbReference type="InterPro" id="IPR004150">
    <property type="entry name" value="NAD_DNA_ligase_OB"/>
</dbReference>
<dbReference type="InterPro" id="IPR010994">
    <property type="entry name" value="RuvA_2-like"/>
</dbReference>
<dbReference type="InterPro" id="IPR004149">
    <property type="entry name" value="Znf_DNAligase_C4"/>
</dbReference>
<dbReference type="NCBIfam" id="TIGR00575">
    <property type="entry name" value="dnlj"/>
    <property type="match status" value="1"/>
</dbReference>
<dbReference type="NCBIfam" id="NF005932">
    <property type="entry name" value="PRK07956.1"/>
    <property type="match status" value="1"/>
</dbReference>
<dbReference type="PANTHER" id="PTHR23389">
    <property type="entry name" value="CHROMOSOME TRANSMISSION FIDELITY FACTOR 18"/>
    <property type="match status" value="1"/>
</dbReference>
<dbReference type="PANTHER" id="PTHR23389:SF9">
    <property type="entry name" value="DNA LIGASE"/>
    <property type="match status" value="1"/>
</dbReference>
<dbReference type="Pfam" id="PF00533">
    <property type="entry name" value="BRCT"/>
    <property type="match status" value="1"/>
</dbReference>
<dbReference type="Pfam" id="PF01653">
    <property type="entry name" value="DNA_ligase_aden"/>
    <property type="match status" value="1"/>
</dbReference>
<dbReference type="Pfam" id="PF03120">
    <property type="entry name" value="DNA_ligase_OB"/>
    <property type="match status" value="1"/>
</dbReference>
<dbReference type="Pfam" id="PF03119">
    <property type="entry name" value="DNA_ligase_ZBD"/>
    <property type="match status" value="1"/>
</dbReference>
<dbReference type="Pfam" id="PF12826">
    <property type="entry name" value="HHH_2"/>
    <property type="match status" value="1"/>
</dbReference>
<dbReference type="PIRSF" id="PIRSF001604">
    <property type="entry name" value="LigA"/>
    <property type="match status" value="1"/>
</dbReference>
<dbReference type="SMART" id="SM00292">
    <property type="entry name" value="BRCT"/>
    <property type="match status" value="1"/>
</dbReference>
<dbReference type="SMART" id="SM00532">
    <property type="entry name" value="LIGANc"/>
    <property type="match status" value="1"/>
</dbReference>
<dbReference type="SUPFAM" id="SSF52113">
    <property type="entry name" value="BRCT domain"/>
    <property type="match status" value="1"/>
</dbReference>
<dbReference type="SUPFAM" id="SSF56091">
    <property type="entry name" value="DNA ligase/mRNA capping enzyme, catalytic domain"/>
    <property type="match status" value="1"/>
</dbReference>
<dbReference type="SUPFAM" id="SSF50249">
    <property type="entry name" value="Nucleic acid-binding proteins"/>
    <property type="match status" value="1"/>
</dbReference>
<dbReference type="SUPFAM" id="SSF47781">
    <property type="entry name" value="RuvA domain 2-like"/>
    <property type="match status" value="1"/>
</dbReference>
<dbReference type="PROSITE" id="PS50172">
    <property type="entry name" value="BRCT"/>
    <property type="match status" value="1"/>
</dbReference>
<dbReference type="PROSITE" id="PS01055">
    <property type="entry name" value="DNA_LIGASE_N1"/>
    <property type="match status" value="1"/>
</dbReference>
<dbReference type="PROSITE" id="PS01056">
    <property type="entry name" value="DNA_LIGASE_N2"/>
    <property type="match status" value="1"/>
</dbReference>
<comment type="function">
    <text evidence="1">DNA ligase that catalyzes the formation of phosphodiester linkages between 5'-phosphoryl and 3'-hydroxyl groups in double-stranded DNA using NAD as a coenzyme and as the energy source for the reaction. It is essential for DNA replication and repair of damaged DNA.</text>
</comment>
<comment type="catalytic activity">
    <reaction evidence="1">
        <text>NAD(+) + (deoxyribonucleotide)n-3'-hydroxyl + 5'-phospho-(deoxyribonucleotide)m = (deoxyribonucleotide)n+m + AMP + beta-nicotinamide D-nucleotide.</text>
        <dbReference type="EC" id="6.5.1.2"/>
    </reaction>
</comment>
<comment type="cofactor">
    <cofactor evidence="1">
        <name>Mg(2+)</name>
        <dbReference type="ChEBI" id="CHEBI:18420"/>
    </cofactor>
    <cofactor evidence="1">
        <name>Mn(2+)</name>
        <dbReference type="ChEBI" id="CHEBI:29035"/>
    </cofactor>
</comment>
<comment type="similarity">
    <text evidence="1">Belongs to the NAD-dependent DNA ligase family. LigA subfamily.</text>
</comment>
<accession>A1R4P6</accession>
<keyword id="KW-0227">DNA damage</keyword>
<keyword id="KW-0234">DNA repair</keyword>
<keyword id="KW-0235">DNA replication</keyword>
<keyword id="KW-0436">Ligase</keyword>
<keyword id="KW-0460">Magnesium</keyword>
<keyword id="KW-0464">Manganese</keyword>
<keyword id="KW-0479">Metal-binding</keyword>
<keyword id="KW-0520">NAD</keyword>
<keyword id="KW-0862">Zinc</keyword>
<proteinExistence type="inferred from homology"/>
<gene>
    <name evidence="1" type="primary">ligA</name>
    <name type="ordered locus">AAur_1434</name>
</gene>
<sequence length="768" mass="83412">MSTPENPDPVDTTTQDAAAAIVAEEGTPPSESLRDEYEQLADLVRKYRYAYYQEDSPTVSDAEFDELYRRLEELEALHPELVSNDSPTQEVGGEVSSAFAAVEHLQRMYSLDDVFSLDELEAWVRKAEASVAKLGDSVPPIAWLTELKIDGLAVNLLYRDGKLVRAATRGDGTTGEDITHNVLTIKEIPRQLSGSGYPSEVEIRGEVFIPSKAFLEFNESLVAAGKAPLANPRNAAAGSLRQKDPAETAKRPLSMFVHGIGAREGLDAKSQSESYKLLEEWGLPVSPYLKVLETFDDVLKFIADYGERRHKLVHEIDGIVVKIDDFATQRALGYTSRVPRWAAAYKYPPEEVHTKLLDIAVNVGRTGRVTPFGLMEPVKVAGSTVGMATLHNQDVVKAKGVMIGDIVILRKAGDVIPEIVGPVLALRDKQEPPVREFVMPTECPSCGTPLAPAKESDVDIRCPNAKSCPSQLRERVFHVASRGAFDIEALGWEAAVALTQPAEPETPPLTSEARLFSLTREDLADVLIRREKRSKGVGTGEYELVPYFYTKGTAKSPSKPTATTEKLFAELEKAKQQPLWRVLVALSIRHVGPTASRALATAFGSMDAIRNATEEQMAHVDGVGPTIAVALKEWFAVDWHNEIVDSWAAAGVRMEDERDASVPRTLEGLTVVVTGTLPNFSRDEAKEAIIIRGGKASGSVSKNTSYLVAGESAGTKLDKAEQLGVPVLDEDGFRELLANGPAQTGTEAEAATDEATVVDETAAEAATE</sequence>
<protein>
    <recommendedName>
        <fullName evidence="1">DNA ligase</fullName>
        <ecNumber evidence="1">6.5.1.2</ecNumber>
    </recommendedName>
    <alternativeName>
        <fullName evidence="1">Polydeoxyribonucleotide synthase [NAD(+)]</fullName>
    </alternativeName>
</protein>
<organism>
    <name type="scientific">Paenarthrobacter aurescens (strain TC1)</name>
    <dbReference type="NCBI Taxonomy" id="290340"/>
    <lineage>
        <taxon>Bacteria</taxon>
        <taxon>Bacillati</taxon>
        <taxon>Actinomycetota</taxon>
        <taxon>Actinomycetes</taxon>
        <taxon>Micrococcales</taxon>
        <taxon>Micrococcaceae</taxon>
        <taxon>Paenarthrobacter</taxon>
    </lineage>
</organism>